<feature type="chain" id="PRO_1000101271" description="Glycine--tRNA ligase beta subunit">
    <location>
        <begin position="1"/>
        <end position="688"/>
    </location>
</feature>
<accession>B1I1T4</accession>
<dbReference type="EC" id="6.1.1.14" evidence="1"/>
<dbReference type="EMBL" id="CP000860">
    <property type="protein sequence ID" value="ACA59031.1"/>
    <property type="molecule type" value="Genomic_DNA"/>
</dbReference>
<dbReference type="RefSeq" id="WP_012301620.1">
    <property type="nucleotide sequence ID" value="NC_010424.1"/>
</dbReference>
<dbReference type="SMR" id="B1I1T4"/>
<dbReference type="STRING" id="477974.Daud_0485"/>
<dbReference type="KEGG" id="dau:Daud_0485"/>
<dbReference type="eggNOG" id="COG0751">
    <property type="taxonomic scope" value="Bacteria"/>
</dbReference>
<dbReference type="HOGENOM" id="CLU_007220_2_2_9"/>
<dbReference type="OrthoDB" id="9775440at2"/>
<dbReference type="Proteomes" id="UP000008544">
    <property type="component" value="Chromosome"/>
</dbReference>
<dbReference type="GO" id="GO:0005829">
    <property type="term" value="C:cytosol"/>
    <property type="evidence" value="ECO:0007669"/>
    <property type="project" value="TreeGrafter"/>
</dbReference>
<dbReference type="GO" id="GO:0004814">
    <property type="term" value="F:arginine-tRNA ligase activity"/>
    <property type="evidence" value="ECO:0007669"/>
    <property type="project" value="InterPro"/>
</dbReference>
<dbReference type="GO" id="GO:0005524">
    <property type="term" value="F:ATP binding"/>
    <property type="evidence" value="ECO:0007669"/>
    <property type="project" value="UniProtKB-UniRule"/>
</dbReference>
<dbReference type="GO" id="GO:0004820">
    <property type="term" value="F:glycine-tRNA ligase activity"/>
    <property type="evidence" value="ECO:0007669"/>
    <property type="project" value="UniProtKB-UniRule"/>
</dbReference>
<dbReference type="GO" id="GO:0006420">
    <property type="term" value="P:arginyl-tRNA aminoacylation"/>
    <property type="evidence" value="ECO:0007669"/>
    <property type="project" value="InterPro"/>
</dbReference>
<dbReference type="GO" id="GO:0006426">
    <property type="term" value="P:glycyl-tRNA aminoacylation"/>
    <property type="evidence" value="ECO:0007669"/>
    <property type="project" value="UniProtKB-UniRule"/>
</dbReference>
<dbReference type="HAMAP" id="MF_00255">
    <property type="entry name" value="Gly_tRNA_synth_beta"/>
    <property type="match status" value="1"/>
</dbReference>
<dbReference type="InterPro" id="IPR008909">
    <property type="entry name" value="DALR_anticod-bd"/>
</dbReference>
<dbReference type="InterPro" id="IPR015944">
    <property type="entry name" value="Gly-tRNA-synth_bsu"/>
</dbReference>
<dbReference type="InterPro" id="IPR006194">
    <property type="entry name" value="Gly-tRNA-synth_heterodimer"/>
</dbReference>
<dbReference type="NCBIfam" id="TIGR00211">
    <property type="entry name" value="glyS"/>
    <property type="match status" value="1"/>
</dbReference>
<dbReference type="PANTHER" id="PTHR30075:SF2">
    <property type="entry name" value="GLYCINE--TRNA LIGASE, CHLOROPLASTIC_MITOCHONDRIAL 2"/>
    <property type="match status" value="1"/>
</dbReference>
<dbReference type="PANTHER" id="PTHR30075">
    <property type="entry name" value="GLYCYL-TRNA SYNTHETASE"/>
    <property type="match status" value="1"/>
</dbReference>
<dbReference type="Pfam" id="PF05746">
    <property type="entry name" value="DALR_1"/>
    <property type="match status" value="1"/>
</dbReference>
<dbReference type="Pfam" id="PF02092">
    <property type="entry name" value="tRNA_synt_2f"/>
    <property type="match status" value="1"/>
</dbReference>
<dbReference type="PRINTS" id="PR01045">
    <property type="entry name" value="TRNASYNTHGB"/>
</dbReference>
<dbReference type="SUPFAM" id="SSF109604">
    <property type="entry name" value="HD-domain/PDEase-like"/>
    <property type="match status" value="1"/>
</dbReference>
<dbReference type="PROSITE" id="PS50861">
    <property type="entry name" value="AA_TRNA_LIGASE_II_GLYAB"/>
    <property type="match status" value="1"/>
</dbReference>
<keyword id="KW-0030">Aminoacyl-tRNA synthetase</keyword>
<keyword id="KW-0067">ATP-binding</keyword>
<keyword id="KW-0963">Cytoplasm</keyword>
<keyword id="KW-0436">Ligase</keyword>
<keyword id="KW-0547">Nucleotide-binding</keyword>
<keyword id="KW-0648">Protein biosynthesis</keyword>
<keyword id="KW-1185">Reference proteome</keyword>
<organism>
    <name type="scientific">Desulforudis audaxviator (strain MP104C)</name>
    <dbReference type="NCBI Taxonomy" id="477974"/>
    <lineage>
        <taxon>Bacteria</taxon>
        <taxon>Bacillati</taxon>
        <taxon>Bacillota</taxon>
        <taxon>Clostridia</taxon>
        <taxon>Thermoanaerobacterales</taxon>
        <taxon>Candidatus Desulforudaceae</taxon>
        <taxon>Candidatus Desulforudis</taxon>
    </lineage>
</organism>
<evidence type="ECO:0000255" key="1">
    <source>
        <dbReference type="HAMAP-Rule" id="MF_00255"/>
    </source>
</evidence>
<gene>
    <name evidence="1" type="primary">glyS</name>
    <name type="ordered locus">Daud_0485</name>
</gene>
<protein>
    <recommendedName>
        <fullName evidence="1">Glycine--tRNA ligase beta subunit</fullName>
        <ecNumber evidence="1">6.1.1.14</ecNumber>
    </recommendedName>
    <alternativeName>
        <fullName evidence="1">Glycyl-tRNA synthetase beta subunit</fullName>
        <shortName evidence="1">GlyRS</shortName>
    </alternativeName>
</protein>
<name>SYGB_DESAP</name>
<proteinExistence type="inferred from homology"/>
<sequence>MAADLVLEIGTEEIPARFLPPALAELAEKGRALLAEYRLAYADLAAYGTPRRLTLYVRDLAGDQAPLVQEIKGPPKKAAFDIDGVPTKAALGFARSQGVAVEDLVTRAVGPVEYVYAVRQETGRPAAEILAELGPRLIGALVFPRPMRWGDQDFRFVRPIRWILCVHGDRVIEFTVAGVRSGPHTWGHRFLSAGRLLVTTAGDYFTLLEENFVIVDPARRREMVWEQVRAAAAAESGTVADDPELLAEVADLLEYPSAFCGCFPESYLELPEPVLVTPMREHQRYFPVRDGTGRLMPFFVGVHNGTAEHLNLIRSGNEKVLRARLADAAFFFREDLEVPLPDRGPELKKVVFQESLGTMHEKVERLTALAGYLSSALGLDETERAQAHRAAVLSKNDLLTSMVYEFPELQGIMGREYALRAGEAPAVAEAIREQYLPAPGGEELPATRAGLVLALADRADNLVGAFGMGVQPTGSQDPYALRRQALGICHLLLDTPAYLDLDDFFREAYAAYGGRLTVEAGEVAAQLADFFGQRLRVLFQDRGLSYGVVEAALAAGHADVRDAWERATAVATFQSHPAFADISTAFTRANNLAKNAAGTRVEPALFKDPVEHTLYQAFLQVREQVEAQIARRRYGAALAALAELREPVDRFFDGVMVMVEEAAVRENRLALLRLVADLFKGIADLSKF</sequence>
<reference key="1">
    <citation type="submission" date="2007-10" db="EMBL/GenBank/DDBJ databases">
        <title>Complete sequence of chromosome of Desulforudis audaxviator MP104C.</title>
        <authorList>
            <person name="Copeland A."/>
            <person name="Lucas S."/>
            <person name="Lapidus A."/>
            <person name="Barry K."/>
            <person name="Glavina del Rio T."/>
            <person name="Dalin E."/>
            <person name="Tice H."/>
            <person name="Bruce D."/>
            <person name="Pitluck S."/>
            <person name="Lowry S.R."/>
            <person name="Larimer F."/>
            <person name="Land M.L."/>
            <person name="Hauser L."/>
            <person name="Kyrpides N."/>
            <person name="Ivanova N.N."/>
            <person name="Richardson P."/>
        </authorList>
    </citation>
    <scope>NUCLEOTIDE SEQUENCE [LARGE SCALE GENOMIC DNA]</scope>
    <source>
        <strain>MP104C</strain>
    </source>
</reference>
<comment type="catalytic activity">
    <reaction evidence="1">
        <text>tRNA(Gly) + glycine + ATP = glycyl-tRNA(Gly) + AMP + diphosphate</text>
        <dbReference type="Rhea" id="RHEA:16013"/>
        <dbReference type="Rhea" id="RHEA-COMP:9664"/>
        <dbReference type="Rhea" id="RHEA-COMP:9683"/>
        <dbReference type="ChEBI" id="CHEBI:30616"/>
        <dbReference type="ChEBI" id="CHEBI:33019"/>
        <dbReference type="ChEBI" id="CHEBI:57305"/>
        <dbReference type="ChEBI" id="CHEBI:78442"/>
        <dbReference type="ChEBI" id="CHEBI:78522"/>
        <dbReference type="ChEBI" id="CHEBI:456215"/>
        <dbReference type="EC" id="6.1.1.14"/>
    </reaction>
</comment>
<comment type="subunit">
    <text evidence="1">Tetramer of two alpha and two beta subunits.</text>
</comment>
<comment type="subcellular location">
    <subcellularLocation>
        <location evidence="1">Cytoplasm</location>
    </subcellularLocation>
</comment>
<comment type="similarity">
    <text evidence="1">Belongs to the class-II aminoacyl-tRNA synthetase family.</text>
</comment>